<proteinExistence type="inferred from homology"/>
<dbReference type="EC" id="1.1.1.262" evidence="1"/>
<dbReference type="EMBL" id="AE001439">
    <property type="protein sequence ID" value="AAD07064.1"/>
    <property type="molecule type" value="Genomic_DNA"/>
</dbReference>
<dbReference type="PIR" id="D71801">
    <property type="entry name" value="D71801"/>
</dbReference>
<dbReference type="RefSeq" id="WP_001075049.1">
    <property type="nucleotide sequence ID" value="NC_000921.1"/>
</dbReference>
<dbReference type="SMR" id="Q9ZJ28"/>
<dbReference type="KEGG" id="hpj:jhp_1490"/>
<dbReference type="PATRIC" id="fig|85963.30.peg.1051"/>
<dbReference type="eggNOG" id="COG1995">
    <property type="taxonomic scope" value="Bacteria"/>
</dbReference>
<dbReference type="UniPathway" id="UPA00244">
    <property type="reaction ID" value="UER00312"/>
</dbReference>
<dbReference type="Proteomes" id="UP000000804">
    <property type="component" value="Chromosome"/>
</dbReference>
<dbReference type="GO" id="GO:0005737">
    <property type="term" value="C:cytoplasm"/>
    <property type="evidence" value="ECO:0007669"/>
    <property type="project" value="UniProtKB-SubCell"/>
</dbReference>
<dbReference type="GO" id="GO:0050570">
    <property type="term" value="F:4-hydroxythreonine-4-phosphate dehydrogenase activity"/>
    <property type="evidence" value="ECO:0007669"/>
    <property type="project" value="UniProtKB-UniRule"/>
</dbReference>
<dbReference type="GO" id="GO:0050897">
    <property type="term" value="F:cobalt ion binding"/>
    <property type="evidence" value="ECO:0007669"/>
    <property type="project" value="UniProtKB-UniRule"/>
</dbReference>
<dbReference type="GO" id="GO:0000287">
    <property type="term" value="F:magnesium ion binding"/>
    <property type="evidence" value="ECO:0007669"/>
    <property type="project" value="UniProtKB-UniRule"/>
</dbReference>
<dbReference type="GO" id="GO:0051287">
    <property type="term" value="F:NAD binding"/>
    <property type="evidence" value="ECO:0007669"/>
    <property type="project" value="InterPro"/>
</dbReference>
<dbReference type="GO" id="GO:0008270">
    <property type="term" value="F:zinc ion binding"/>
    <property type="evidence" value="ECO:0007669"/>
    <property type="project" value="UniProtKB-UniRule"/>
</dbReference>
<dbReference type="GO" id="GO:0042823">
    <property type="term" value="P:pyridoxal phosphate biosynthetic process"/>
    <property type="evidence" value="ECO:0007669"/>
    <property type="project" value="UniProtKB-UniRule"/>
</dbReference>
<dbReference type="GO" id="GO:0008615">
    <property type="term" value="P:pyridoxine biosynthetic process"/>
    <property type="evidence" value="ECO:0007669"/>
    <property type="project" value="UniProtKB-UniRule"/>
</dbReference>
<dbReference type="Gene3D" id="3.40.718.10">
    <property type="entry name" value="Isopropylmalate Dehydrogenase"/>
    <property type="match status" value="1"/>
</dbReference>
<dbReference type="HAMAP" id="MF_02086">
    <property type="entry name" value="PdxA_Epsilonprot"/>
    <property type="match status" value="1"/>
</dbReference>
<dbReference type="InterPro" id="IPR037539">
    <property type="entry name" value="PdxA_epsilonprot"/>
</dbReference>
<dbReference type="InterPro" id="IPR005255">
    <property type="entry name" value="PdxA_fam"/>
</dbReference>
<dbReference type="NCBIfam" id="TIGR00557">
    <property type="entry name" value="pdxA"/>
    <property type="match status" value="1"/>
</dbReference>
<dbReference type="NCBIfam" id="NF003040">
    <property type="entry name" value="PRK03946.1"/>
    <property type="match status" value="1"/>
</dbReference>
<dbReference type="PANTHER" id="PTHR30004">
    <property type="entry name" value="4-HYDROXYTHREONINE-4-PHOSPHATE DEHYDROGENASE"/>
    <property type="match status" value="1"/>
</dbReference>
<dbReference type="PANTHER" id="PTHR30004:SF6">
    <property type="entry name" value="D-THREONATE 4-PHOSPHATE DEHYDROGENASE"/>
    <property type="match status" value="1"/>
</dbReference>
<dbReference type="Pfam" id="PF04166">
    <property type="entry name" value="PdxA"/>
    <property type="match status" value="1"/>
</dbReference>
<dbReference type="SUPFAM" id="SSF53659">
    <property type="entry name" value="Isocitrate/Isopropylmalate dehydrogenase-like"/>
    <property type="match status" value="1"/>
</dbReference>
<accession>Q9ZJ28</accession>
<evidence type="ECO:0000255" key="1">
    <source>
        <dbReference type="HAMAP-Rule" id="MF_02086"/>
    </source>
</evidence>
<feature type="chain" id="PRO_0000188810" description="4-hydroxythreonine-4-phosphate dehydrogenase">
    <location>
        <begin position="1"/>
        <end position="307"/>
    </location>
</feature>
<feature type="binding site" evidence="1">
    <location>
        <position position="126"/>
    </location>
    <ligand>
        <name>substrate</name>
    </ligand>
</feature>
<feature type="binding site" evidence="1">
    <location>
        <position position="127"/>
    </location>
    <ligand>
        <name>substrate</name>
    </ligand>
</feature>
<feature type="binding site" evidence="1">
    <location>
        <position position="156"/>
    </location>
    <ligand>
        <name>a divalent metal cation</name>
        <dbReference type="ChEBI" id="CHEBI:60240"/>
        <note>ligand shared between dimeric partners</note>
    </ligand>
</feature>
<feature type="binding site" evidence="1">
    <location>
        <position position="195"/>
    </location>
    <ligand>
        <name>a divalent metal cation</name>
        <dbReference type="ChEBI" id="CHEBI:60240"/>
        <note>ligand shared between dimeric partners</note>
    </ligand>
</feature>
<feature type="binding site" evidence="1">
    <location>
        <position position="251"/>
    </location>
    <ligand>
        <name>a divalent metal cation</name>
        <dbReference type="ChEBI" id="CHEBI:60240"/>
        <note>ligand shared between dimeric partners</note>
    </ligand>
</feature>
<feature type="binding site" evidence="1">
    <location>
        <position position="259"/>
    </location>
    <ligand>
        <name>substrate</name>
    </ligand>
</feature>
<feature type="binding site" evidence="1">
    <location>
        <position position="268"/>
    </location>
    <ligand>
        <name>substrate</name>
    </ligand>
</feature>
<feature type="binding site" evidence="1">
    <location>
        <position position="277"/>
    </location>
    <ligand>
        <name>substrate</name>
    </ligand>
</feature>
<comment type="function">
    <text evidence="1">Catalyzes the NAD(P)-dependent oxidation of 4-(phosphooxy)-L-threonine (HTP) into 2-amino-3-oxo-4-(phosphooxy)butyric acid which spontaneously decarboxylates to form 3-amino-2-oxopropyl phosphate (AHAP).</text>
</comment>
<comment type="catalytic activity">
    <reaction evidence="1">
        <text>4-(phosphooxy)-L-threonine + NAD(+) = 3-amino-2-oxopropyl phosphate + CO2 + NADH</text>
        <dbReference type="Rhea" id="RHEA:32275"/>
        <dbReference type="ChEBI" id="CHEBI:16526"/>
        <dbReference type="ChEBI" id="CHEBI:57279"/>
        <dbReference type="ChEBI" id="CHEBI:57540"/>
        <dbReference type="ChEBI" id="CHEBI:57945"/>
        <dbReference type="ChEBI" id="CHEBI:58452"/>
        <dbReference type="EC" id="1.1.1.262"/>
    </reaction>
</comment>
<comment type="cofactor">
    <cofactor evidence="1">
        <name>Zn(2+)</name>
        <dbReference type="ChEBI" id="CHEBI:29105"/>
    </cofactor>
    <cofactor evidence="1">
        <name>Mg(2+)</name>
        <dbReference type="ChEBI" id="CHEBI:18420"/>
    </cofactor>
    <cofactor evidence="1">
        <name>Co(2+)</name>
        <dbReference type="ChEBI" id="CHEBI:48828"/>
    </cofactor>
</comment>
<comment type="pathway">
    <text evidence="1">Cofactor biosynthesis; pyridoxine 5'-phosphate biosynthesis; pyridoxine 5'-phosphate from D-erythrose 4-phosphate: step 4/5.</text>
</comment>
<comment type="subunit">
    <text evidence="1">Homodimer.</text>
</comment>
<comment type="subcellular location">
    <subcellularLocation>
        <location evidence="1">Cytoplasm</location>
    </subcellularLocation>
</comment>
<comment type="miscellaneous">
    <text evidence="1">The active site is located at the dimer interface.</text>
</comment>
<comment type="similarity">
    <text evidence="1">Belongs to the PdxA family.</text>
</comment>
<name>PDXA_HELPJ</name>
<gene>
    <name evidence="1" type="primary">pdxA</name>
    <name type="ordered locus">jhp_1490</name>
</gene>
<organism>
    <name type="scientific">Helicobacter pylori (strain J99 / ATCC 700824)</name>
    <name type="common">Campylobacter pylori J99</name>
    <dbReference type="NCBI Taxonomy" id="85963"/>
    <lineage>
        <taxon>Bacteria</taxon>
        <taxon>Pseudomonadati</taxon>
        <taxon>Campylobacterota</taxon>
        <taxon>Epsilonproteobacteria</taxon>
        <taxon>Campylobacterales</taxon>
        <taxon>Helicobacteraceae</taxon>
        <taxon>Helicobacter</taxon>
    </lineage>
</organism>
<sequence>MAKKKIAISCGDIQGVGLELILKSHKEVSALCEPLYLVHSELLERANQLLDNAYETKTLNAIAIDAPLPLLNSSTIGKVSTQSGAYSFESFKKACELADSKEVDGICTLPINKLAWQQAQIPFVGHTDFLKQRYKDHQIIMMLGCSKLFVGLFSDHVPLSAVSQLIQVKALVKFLLAFQKSTQAKIVQVCGFNPHAGEEGLFGEEDEKILKAIQESNQTLGFECFLGPLPADSAFAPNKRKITPFYVSMSHDVGLAPLKALYFDESINVSLNAPILRASTDHGTAFDIAYQNKANHKSYLNAIKYLA</sequence>
<protein>
    <recommendedName>
        <fullName evidence="1">4-hydroxythreonine-4-phosphate dehydrogenase</fullName>
        <ecNumber evidence="1">1.1.1.262</ecNumber>
    </recommendedName>
    <alternativeName>
        <fullName evidence="1">4-(phosphohydroxy)-L-threonine dehydrogenase</fullName>
    </alternativeName>
</protein>
<reference key="1">
    <citation type="journal article" date="1999" name="Nature">
        <title>Genomic sequence comparison of two unrelated isolates of the human gastric pathogen Helicobacter pylori.</title>
        <authorList>
            <person name="Alm R.A."/>
            <person name="Ling L.-S.L."/>
            <person name="Moir D.T."/>
            <person name="King B.L."/>
            <person name="Brown E.D."/>
            <person name="Doig P.C."/>
            <person name="Smith D.R."/>
            <person name="Noonan B."/>
            <person name="Guild B.C."/>
            <person name="deJonge B.L."/>
            <person name="Carmel G."/>
            <person name="Tummino P.J."/>
            <person name="Caruso A."/>
            <person name="Uria-Nickelsen M."/>
            <person name="Mills D.M."/>
            <person name="Ives C."/>
            <person name="Gibson R."/>
            <person name="Merberg D."/>
            <person name="Mills S.D."/>
            <person name="Jiang Q."/>
            <person name="Taylor D.E."/>
            <person name="Vovis G.F."/>
            <person name="Trust T.J."/>
        </authorList>
    </citation>
    <scope>NUCLEOTIDE SEQUENCE [LARGE SCALE GENOMIC DNA]</scope>
    <source>
        <strain>J99 / ATCC 700824</strain>
    </source>
</reference>
<keyword id="KW-0170">Cobalt</keyword>
<keyword id="KW-0963">Cytoplasm</keyword>
<keyword id="KW-0460">Magnesium</keyword>
<keyword id="KW-0479">Metal-binding</keyword>
<keyword id="KW-0520">NAD</keyword>
<keyword id="KW-0521">NADP</keyword>
<keyword id="KW-0560">Oxidoreductase</keyword>
<keyword id="KW-0664">Pyridoxine biosynthesis</keyword>
<keyword id="KW-0862">Zinc</keyword>